<gene>
    <name evidence="1" type="primary">accD</name>
    <name type="ordered locus">BAMEG_4877</name>
</gene>
<proteinExistence type="inferred from homology"/>
<comment type="function">
    <text evidence="1">Component of the acetyl coenzyme A carboxylase (ACC) complex. Biotin carboxylase (BC) catalyzes the carboxylation of biotin on its carrier protein (BCCP) and then the CO(2) group is transferred by the transcarboxylase to acetyl-CoA to form malonyl-CoA.</text>
</comment>
<comment type="catalytic activity">
    <reaction evidence="1">
        <text>N(6)-carboxybiotinyl-L-lysyl-[protein] + acetyl-CoA = N(6)-biotinyl-L-lysyl-[protein] + malonyl-CoA</text>
        <dbReference type="Rhea" id="RHEA:54728"/>
        <dbReference type="Rhea" id="RHEA-COMP:10505"/>
        <dbReference type="Rhea" id="RHEA-COMP:10506"/>
        <dbReference type="ChEBI" id="CHEBI:57288"/>
        <dbReference type="ChEBI" id="CHEBI:57384"/>
        <dbReference type="ChEBI" id="CHEBI:83144"/>
        <dbReference type="ChEBI" id="CHEBI:83145"/>
        <dbReference type="EC" id="2.1.3.15"/>
    </reaction>
</comment>
<comment type="cofactor">
    <cofactor evidence="1">
        <name>Zn(2+)</name>
        <dbReference type="ChEBI" id="CHEBI:29105"/>
    </cofactor>
    <text evidence="1">Binds 1 zinc ion per subunit.</text>
</comment>
<comment type="pathway">
    <text evidence="1">Lipid metabolism; malonyl-CoA biosynthesis; malonyl-CoA from acetyl-CoA: step 1/1.</text>
</comment>
<comment type="subunit">
    <text evidence="1">Acetyl-CoA carboxylase is a heterohexamer composed of biotin carboxyl carrier protein (AccB), biotin carboxylase (AccC) and two subunits each of ACCase subunit alpha (AccA) and ACCase subunit beta (AccD).</text>
</comment>
<comment type="subcellular location">
    <subcellularLocation>
        <location evidence="1">Cytoplasm</location>
    </subcellularLocation>
</comment>
<comment type="similarity">
    <text evidence="1">Belongs to the AccD/PCCB family.</text>
</comment>
<accession>C3L8Y0</accession>
<dbReference type="EC" id="2.1.3.15" evidence="1"/>
<dbReference type="EMBL" id="CP001215">
    <property type="protein sequence ID" value="ACP14952.1"/>
    <property type="molecule type" value="Genomic_DNA"/>
</dbReference>
<dbReference type="RefSeq" id="WP_000942874.1">
    <property type="nucleotide sequence ID" value="NC_012581.1"/>
</dbReference>
<dbReference type="SMR" id="C3L8Y0"/>
<dbReference type="GeneID" id="45024472"/>
<dbReference type="KEGG" id="bah:BAMEG_4877"/>
<dbReference type="HOGENOM" id="CLU_015486_1_1_9"/>
<dbReference type="UniPathway" id="UPA00655">
    <property type="reaction ID" value="UER00711"/>
</dbReference>
<dbReference type="GO" id="GO:0009317">
    <property type="term" value="C:acetyl-CoA carboxylase complex"/>
    <property type="evidence" value="ECO:0007669"/>
    <property type="project" value="InterPro"/>
</dbReference>
<dbReference type="GO" id="GO:0003989">
    <property type="term" value="F:acetyl-CoA carboxylase activity"/>
    <property type="evidence" value="ECO:0007669"/>
    <property type="project" value="InterPro"/>
</dbReference>
<dbReference type="GO" id="GO:0005524">
    <property type="term" value="F:ATP binding"/>
    <property type="evidence" value="ECO:0007669"/>
    <property type="project" value="UniProtKB-KW"/>
</dbReference>
<dbReference type="GO" id="GO:0016743">
    <property type="term" value="F:carboxyl- or carbamoyltransferase activity"/>
    <property type="evidence" value="ECO:0007669"/>
    <property type="project" value="UniProtKB-UniRule"/>
</dbReference>
<dbReference type="GO" id="GO:0008270">
    <property type="term" value="F:zinc ion binding"/>
    <property type="evidence" value="ECO:0007669"/>
    <property type="project" value="UniProtKB-UniRule"/>
</dbReference>
<dbReference type="GO" id="GO:0006633">
    <property type="term" value="P:fatty acid biosynthetic process"/>
    <property type="evidence" value="ECO:0007669"/>
    <property type="project" value="UniProtKB-KW"/>
</dbReference>
<dbReference type="GO" id="GO:2001295">
    <property type="term" value="P:malonyl-CoA biosynthetic process"/>
    <property type="evidence" value="ECO:0007669"/>
    <property type="project" value="UniProtKB-UniRule"/>
</dbReference>
<dbReference type="Gene3D" id="3.90.226.10">
    <property type="entry name" value="2-enoyl-CoA Hydratase, Chain A, domain 1"/>
    <property type="match status" value="1"/>
</dbReference>
<dbReference type="HAMAP" id="MF_01395">
    <property type="entry name" value="AcetylCoA_CT_beta"/>
    <property type="match status" value="1"/>
</dbReference>
<dbReference type="InterPro" id="IPR034733">
    <property type="entry name" value="AcCoA_carboxyl_beta"/>
</dbReference>
<dbReference type="InterPro" id="IPR000438">
    <property type="entry name" value="Acetyl_CoA_COase_Trfase_b_su"/>
</dbReference>
<dbReference type="InterPro" id="IPR029045">
    <property type="entry name" value="ClpP/crotonase-like_dom_sf"/>
</dbReference>
<dbReference type="InterPro" id="IPR011762">
    <property type="entry name" value="COA_CT_N"/>
</dbReference>
<dbReference type="InterPro" id="IPR041010">
    <property type="entry name" value="Znf-ACC"/>
</dbReference>
<dbReference type="NCBIfam" id="TIGR00515">
    <property type="entry name" value="accD"/>
    <property type="match status" value="1"/>
</dbReference>
<dbReference type="PANTHER" id="PTHR42995">
    <property type="entry name" value="ACETYL-COENZYME A CARBOXYLASE CARBOXYL TRANSFERASE SUBUNIT BETA, CHLOROPLASTIC"/>
    <property type="match status" value="1"/>
</dbReference>
<dbReference type="PANTHER" id="PTHR42995:SF5">
    <property type="entry name" value="ACETYL-COENZYME A CARBOXYLASE CARBOXYL TRANSFERASE SUBUNIT BETA, CHLOROPLASTIC"/>
    <property type="match status" value="1"/>
</dbReference>
<dbReference type="Pfam" id="PF01039">
    <property type="entry name" value="Carboxyl_trans"/>
    <property type="match status" value="1"/>
</dbReference>
<dbReference type="Pfam" id="PF17848">
    <property type="entry name" value="Zn_ribbon_ACC"/>
    <property type="match status" value="1"/>
</dbReference>
<dbReference type="PRINTS" id="PR01070">
    <property type="entry name" value="ACCCTRFRASEB"/>
</dbReference>
<dbReference type="SUPFAM" id="SSF52096">
    <property type="entry name" value="ClpP/crotonase"/>
    <property type="match status" value="1"/>
</dbReference>
<dbReference type="PROSITE" id="PS50980">
    <property type="entry name" value="COA_CT_NTER"/>
    <property type="match status" value="1"/>
</dbReference>
<keyword id="KW-0067">ATP-binding</keyword>
<keyword id="KW-0963">Cytoplasm</keyword>
<keyword id="KW-0275">Fatty acid biosynthesis</keyword>
<keyword id="KW-0276">Fatty acid metabolism</keyword>
<keyword id="KW-0444">Lipid biosynthesis</keyword>
<keyword id="KW-0443">Lipid metabolism</keyword>
<keyword id="KW-0479">Metal-binding</keyword>
<keyword id="KW-0547">Nucleotide-binding</keyword>
<keyword id="KW-0808">Transferase</keyword>
<keyword id="KW-0862">Zinc</keyword>
<keyword id="KW-0863">Zinc-finger</keyword>
<protein>
    <recommendedName>
        <fullName evidence="1">Acetyl-coenzyme A carboxylase carboxyl transferase subunit beta</fullName>
        <shortName evidence="1">ACCase subunit beta</shortName>
        <shortName evidence="1">Acetyl-CoA carboxylase carboxyltransferase subunit beta</shortName>
        <ecNumber evidence="1">2.1.3.15</ecNumber>
    </recommendedName>
</protein>
<name>ACCD_BACAC</name>
<feature type="chain" id="PRO_0000389671" description="Acetyl-coenzyme A carboxylase carboxyl transferase subunit beta">
    <location>
        <begin position="1"/>
        <end position="289"/>
    </location>
</feature>
<feature type="domain" description="CoA carboxyltransferase N-terminal" evidence="2">
    <location>
        <begin position="28"/>
        <end position="289"/>
    </location>
</feature>
<feature type="zinc finger region" description="C4-type" evidence="1">
    <location>
        <begin position="32"/>
        <end position="54"/>
    </location>
</feature>
<feature type="binding site" evidence="1">
    <location>
        <position position="32"/>
    </location>
    <ligand>
        <name>Zn(2+)</name>
        <dbReference type="ChEBI" id="CHEBI:29105"/>
    </ligand>
</feature>
<feature type="binding site" evidence="1">
    <location>
        <position position="35"/>
    </location>
    <ligand>
        <name>Zn(2+)</name>
        <dbReference type="ChEBI" id="CHEBI:29105"/>
    </ligand>
</feature>
<feature type="binding site" evidence="1">
    <location>
        <position position="51"/>
    </location>
    <ligand>
        <name>Zn(2+)</name>
        <dbReference type="ChEBI" id="CHEBI:29105"/>
    </ligand>
</feature>
<feature type="binding site" evidence="1">
    <location>
        <position position="54"/>
    </location>
    <ligand>
        <name>Zn(2+)</name>
        <dbReference type="ChEBI" id="CHEBI:29105"/>
    </ligand>
</feature>
<sequence length="289" mass="32281">MLRDLFVKKKKYAAIPSEQVRKDVPDGVMTKCPKCKKIMYTKEVLKNLKVCVNCGYHHPMNAWERLDSILDEGSFREYDKEMVSLNPLEFPNYEEKLESDRKKTELNEAVVTGEGTIDDMLVVVAVMDSRFRMGSMGSVVGEKIARAVEKAYDLQVPFIIFTASGGARMQEGILSLMQMAKTSVALKKHSNAGGLFISVMTHPTTGGVSASFASLGDYNLAEPGALIGFAGRRVIEQTVREKLPEDFQTAEFLLEHGQLDAVVHRDDMRESLRKILEVHQGGEMAVWQS</sequence>
<organism>
    <name type="scientific">Bacillus anthracis (strain CDC 684 / NRRL 3495)</name>
    <dbReference type="NCBI Taxonomy" id="568206"/>
    <lineage>
        <taxon>Bacteria</taxon>
        <taxon>Bacillati</taxon>
        <taxon>Bacillota</taxon>
        <taxon>Bacilli</taxon>
        <taxon>Bacillales</taxon>
        <taxon>Bacillaceae</taxon>
        <taxon>Bacillus</taxon>
        <taxon>Bacillus cereus group</taxon>
    </lineage>
</organism>
<evidence type="ECO:0000255" key="1">
    <source>
        <dbReference type="HAMAP-Rule" id="MF_01395"/>
    </source>
</evidence>
<evidence type="ECO:0000255" key="2">
    <source>
        <dbReference type="PROSITE-ProRule" id="PRU01136"/>
    </source>
</evidence>
<reference key="1">
    <citation type="submission" date="2008-10" db="EMBL/GenBank/DDBJ databases">
        <title>Genome sequence of Bacillus anthracis str. CDC 684.</title>
        <authorList>
            <person name="Dodson R.J."/>
            <person name="Munk A.C."/>
            <person name="Brettin T."/>
            <person name="Bruce D."/>
            <person name="Detter C."/>
            <person name="Tapia R."/>
            <person name="Han C."/>
            <person name="Sutton G."/>
            <person name="Sims D."/>
        </authorList>
    </citation>
    <scope>NUCLEOTIDE SEQUENCE [LARGE SCALE GENOMIC DNA]</scope>
    <source>
        <strain>CDC 684 / NRRL 3495</strain>
    </source>
</reference>